<name>PG155_CWPXB</name>
<proteinExistence type="inferred from homology"/>
<comment type="function">
    <text evidence="1">Envelope protein required for virus entry into host cell and for cell-cell fusion (syncytium formation).</text>
</comment>
<comment type="subunit">
    <text evidence="1">Part of a stable entry-fusion complex (EFC) which is at least composed of proteins OPG143, OPG147, OPG155, OPG086, OPG094, OPG107, OPG104, and OPG099. Formation of the viral membrane is necessary for the assembly of the complex. Interacts directly with protein OPG107.</text>
</comment>
<comment type="subcellular location">
    <subcellularLocation>
        <location evidence="1">Virion membrane</location>
        <topology evidence="1">Single-pass type III membrane protein</topology>
    </subcellularLocation>
    <text evidence="1">Component of the mature virion (MV) membrane.</text>
</comment>
<comment type="PTM">
    <text evidence="1">Contains two intramolecular disulfide bonds. They are created by the viral disulfide bond formation pathway, a poxvirus-specific pathway that operates on the cytoplasmic side of the MV membranes.</text>
</comment>
<comment type="similarity">
    <text evidence="3">Belongs to the orthopoxvirus OPG155 protein family.</text>
</comment>
<organismHost>
    <name type="scientific">Bos taurus</name>
    <name type="common">Bovine</name>
    <dbReference type="NCBI Taxonomy" id="9913"/>
</organismHost>
<organismHost>
    <name type="scientific">Felis catus</name>
    <name type="common">Cat</name>
    <name type="synonym">Felis silvestris catus</name>
    <dbReference type="NCBI Taxonomy" id="9685"/>
</organismHost>
<organismHost>
    <name type="scientific">Homo sapiens</name>
    <name type="common">Human</name>
    <dbReference type="NCBI Taxonomy" id="9606"/>
</organismHost>
<organismHost>
    <name type="scientific">Loxodonta africana</name>
    <name type="common">African elephant</name>
    <dbReference type="NCBI Taxonomy" id="9785"/>
</organismHost>
<organismHost>
    <name type="scientific">Microtus agrestis</name>
    <name type="common">Short-tailed field vole</name>
    <dbReference type="NCBI Taxonomy" id="29092"/>
</organismHost>
<organismHost>
    <name type="scientific">Mus musculus</name>
    <name type="common">Mouse</name>
    <dbReference type="NCBI Taxonomy" id="10090"/>
</organismHost>
<organismHost>
    <name type="scientific">Myodes glareolus</name>
    <name type="common">Bank vole</name>
    <name type="synonym">Clethrionomys glareolus</name>
    <dbReference type="NCBI Taxonomy" id="447135"/>
</organismHost>
<feature type="chain" id="PRO_0000099288" description="Envelope protein OPG155">
    <location>
        <begin position="1"/>
        <end position="146"/>
    </location>
</feature>
<feature type="transmembrane region" description="Helical; Signal-anchor for type II membrane protein" evidence="2">
    <location>
        <begin position="1"/>
        <end position="21"/>
    </location>
</feature>
<feature type="topological domain" description="Virion surface" evidence="2">
    <location>
        <begin position="22"/>
        <end position="146"/>
    </location>
</feature>
<organism>
    <name type="scientific">Cowpox virus (strain Brighton Red)</name>
    <name type="common">CPV</name>
    <dbReference type="NCBI Taxonomy" id="265872"/>
    <lineage>
        <taxon>Viruses</taxon>
        <taxon>Varidnaviria</taxon>
        <taxon>Bamfordvirae</taxon>
        <taxon>Nucleocytoviricota</taxon>
        <taxon>Pokkesviricetes</taxon>
        <taxon>Chitovirales</taxon>
        <taxon>Poxviridae</taxon>
        <taxon>Chordopoxvirinae</taxon>
        <taxon>Orthopoxvirus</taxon>
        <taxon>Cowpox virus</taxon>
    </lineage>
</organism>
<gene>
    <name type="primary">OPG155</name>
    <name type="ordered locus">CPXV163</name>
</gene>
<sequence>MNSLSIFFIVVATAAVCLLFIQGYSIYENYGNIKEFNATHAAFEYSKSIGGTPALDRRVQDVNDTISDVKQKWRCVTYPGNGFVSASVFGFQAEVGPNNTRSIRKFNTMQQCIDFTFSDVINIDIYNPCVAPNINNAECQFLKSVL</sequence>
<dbReference type="EMBL" id="AF482758">
    <property type="protein sequence ID" value="AAM13605.1"/>
    <property type="molecule type" value="Genomic_DNA"/>
</dbReference>
<dbReference type="SMR" id="Q8QMS5"/>
<dbReference type="KEGG" id="vg:1486042"/>
<dbReference type="Proteomes" id="UP000152733">
    <property type="component" value="Segment"/>
</dbReference>
<dbReference type="GO" id="GO:0016020">
    <property type="term" value="C:membrane"/>
    <property type="evidence" value="ECO:0007669"/>
    <property type="project" value="UniProtKB-KW"/>
</dbReference>
<dbReference type="GO" id="GO:0019031">
    <property type="term" value="C:viral envelope"/>
    <property type="evidence" value="ECO:0007669"/>
    <property type="project" value="UniProtKB-KW"/>
</dbReference>
<dbReference type="GO" id="GO:0055036">
    <property type="term" value="C:virion membrane"/>
    <property type="evidence" value="ECO:0007669"/>
    <property type="project" value="UniProtKB-SubCell"/>
</dbReference>
<dbReference type="GO" id="GO:0039663">
    <property type="term" value="P:membrane fusion involved in viral entry into host cell"/>
    <property type="evidence" value="ECO:0007669"/>
    <property type="project" value="UniProtKB-KW"/>
</dbReference>
<dbReference type="GO" id="GO:0046718">
    <property type="term" value="P:symbiont entry into host cell"/>
    <property type="evidence" value="ECO:0007669"/>
    <property type="project" value="UniProtKB-KW"/>
</dbReference>
<dbReference type="InterPro" id="IPR007664">
    <property type="entry name" value="Poxvirus_A28"/>
</dbReference>
<dbReference type="Pfam" id="PF04584">
    <property type="entry name" value="Pox_A28"/>
    <property type="match status" value="1"/>
</dbReference>
<evidence type="ECO:0000250" key="1">
    <source>
        <dbReference type="UniProtKB" id="P68633"/>
    </source>
</evidence>
<evidence type="ECO:0000255" key="2"/>
<evidence type="ECO:0000305" key="3"/>
<accession>Q8QMS5</accession>
<reference key="1">
    <citation type="submission" date="2003-05" db="EMBL/GenBank/DDBJ databases">
        <authorList>
            <person name="Dietrich F.S."/>
            <person name="Ray C.A."/>
            <person name="Sharma A.D."/>
            <person name="Allen A."/>
            <person name="Pickup D.J."/>
        </authorList>
    </citation>
    <scope>NUCLEOTIDE SEQUENCE [LARGE SCALE GENOMIC DNA]</scope>
</reference>
<protein>
    <recommendedName>
        <fullName>Envelope protein OPG155</fullName>
    </recommendedName>
    <alternativeName>
        <fullName>Protein CPXV163</fullName>
    </alternativeName>
</protein>
<keyword id="KW-1015">Disulfide bond</keyword>
<keyword id="KW-1168">Fusion of virus membrane with host membrane</keyword>
<keyword id="KW-0426">Late protein</keyword>
<keyword id="KW-0472">Membrane</keyword>
<keyword id="KW-0597">Phosphoprotein</keyword>
<keyword id="KW-0735">Signal-anchor</keyword>
<keyword id="KW-0812">Transmembrane</keyword>
<keyword id="KW-1133">Transmembrane helix</keyword>
<keyword id="KW-0261">Viral envelope protein</keyword>
<keyword id="KW-1162">Viral penetration into host cytoplasm</keyword>
<keyword id="KW-0946">Virion</keyword>
<keyword id="KW-1160">Virus entry into host cell</keyword>